<sequence length="167" mass="17836">MTRKQRRLLMIGGAGVVLIVAVGLVLNALRDSIVFFSTPKMVAEQHIEAGKRFRLGGVVEPGSLQRGEQLRVSFKVTDGAASLPVAYKGILPDLFREGQGVIAEGSLDKAGVFEADTVLAKHDEKYMPKEVADALKKDGHWKDDYGKKSPGETTAGQTSANAAEGGK</sequence>
<organism>
    <name type="scientific">Rhodopseudomonas palustris (strain TIE-1)</name>
    <dbReference type="NCBI Taxonomy" id="395960"/>
    <lineage>
        <taxon>Bacteria</taxon>
        <taxon>Pseudomonadati</taxon>
        <taxon>Pseudomonadota</taxon>
        <taxon>Alphaproteobacteria</taxon>
        <taxon>Hyphomicrobiales</taxon>
        <taxon>Nitrobacteraceae</taxon>
        <taxon>Rhodopseudomonas</taxon>
    </lineage>
</organism>
<proteinExistence type="inferred from homology"/>
<gene>
    <name evidence="1" type="primary">ccmE</name>
    <name evidence="1" type="synonym">cycJ</name>
    <name type="ordered locus">Rpal_2131</name>
</gene>
<reference key="1">
    <citation type="submission" date="2008-05" db="EMBL/GenBank/DDBJ databases">
        <title>Complete sequence of Rhodopseudomonas palustris TIE-1.</title>
        <authorList>
            <consortium name="US DOE Joint Genome Institute"/>
            <person name="Lucas S."/>
            <person name="Copeland A."/>
            <person name="Lapidus A."/>
            <person name="Glavina del Rio T."/>
            <person name="Dalin E."/>
            <person name="Tice H."/>
            <person name="Pitluck S."/>
            <person name="Chain P."/>
            <person name="Malfatti S."/>
            <person name="Shin M."/>
            <person name="Vergez L."/>
            <person name="Lang D."/>
            <person name="Schmutz J."/>
            <person name="Larimer F."/>
            <person name="Land M."/>
            <person name="Hauser L."/>
            <person name="Kyrpides N."/>
            <person name="Mikhailova N."/>
            <person name="Emerson D."/>
            <person name="Newman D.K."/>
            <person name="Roden E."/>
            <person name="Richardson P."/>
        </authorList>
    </citation>
    <scope>NUCLEOTIDE SEQUENCE [LARGE SCALE GENOMIC DNA]</scope>
    <source>
        <strain>TIE-1</strain>
    </source>
</reference>
<dbReference type="EMBL" id="CP001096">
    <property type="protein sequence ID" value="ACF00653.1"/>
    <property type="molecule type" value="Genomic_DNA"/>
</dbReference>
<dbReference type="RefSeq" id="WP_011157425.1">
    <property type="nucleotide sequence ID" value="NC_011004.1"/>
</dbReference>
<dbReference type="SMR" id="B3QBQ3"/>
<dbReference type="GeneID" id="66892963"/>
<dbReference type="KEGG" id="rpt:Rpal_2131"/>
<dbReference type="HOGENOM" id="CLU_079503_1_1_5"/>
<dbReference type="OrthoDB" id="9793584at2"/>
<dbReference type="Proteomes" id="UP000001725">
    <property type="component" value="Chromosome"/>
</dbReference>
<dbReference type="GO" id="GO:0005886">
    <property type="term" value="C:plasma membrane"/>
    <property type="evidence" value="ECO:0007669"/>
    <property type="project" value="UniProtKB-SubCell"/>
</dbReference>
<dbReference type="GO" id="GO:0020037">
    <property type="term" value="F:heme binding"/>
    <property type="evidence" value="ECO:0007669"/>
    <property type="project" value="InterPro"/>
</dbReference>
<dbReference type="GO" id="GO:0046872">
    <property type="term" value="F:metal ion binding"/>
    <property type="evidence" value="ECO:0007669"/>
    <property type="project" value="UniProtKB-KW"/>
</dbReference>
<dbReference type="GO" id="GO:0017004">
    <property type="term" value="P:cytochrome complex assembly"/>
    <property type="evidence" value="ECO:0007669"/>
    <property type="project" value="UniProtKB-KW"/>
</dbReference>
<dbReference type="FunFam" id="2.40.50.140:FF:000104">
    <property type="entry name" value="Cytochrome c-type biogenesis protein CcmE"/>
    <property type="match status" value="1"/>
</dbReference>
<dbReference type="Gene3D" id="2.40.50.140">
    <property type="entry name" value="Nucleic acid-binding proteins"/>
    <property type="match status" value="1"/>
</dbReference>
<dbReference type="HAMAP" id="MF_01959">
    <property type="entry name" value="CcmE"/>
    <property type="match status" value="1"/>
</dbReference>
<dbReference type="InterPro" id="IPR004329">
    <property type="entry name" value="CcmE"/>
</dbReference>
<dbReference type="InterPro" id="IPR036127">
    <property type="entry name" value="CcmE-like_sf"/>
</dbReference>
<dbReference type="InterPro" id="IPR012340">
    <property type="entry name" value="NA-bd_OB-fold"/>
</dbReference>
<dbReference type="NCBIfam" id="NF009727">
    <property type="entry name" value="PRK13254.1-1"/>
    <property type="match status" value="1"/>
</dbReference>
<dbReference type="NCBIfam" id="NF009729">
    <property type="entry name" value="PRK13254.1-3"/>
    <property type="match status" value="1"/>
</dbReference>
<dbReference type="NCBIfam" id="NF009731">
    <property type="entry name" value="PRK13254.1-5"/>
    <property type="match status" value="1"/>
</dbReference>
<dbReference type="PANTHER" id="PTHR34128">
    <property type="entry name" value="CYTOCHROME C-TYPE BIOGENESIS PROTEIN CCME HOMOLOG, MITOCHONDRIAL"/>
    <property type="match status" value="1"/>
</dbReference>
<dbReference type="PANTHER" id="PTHR34128:SF2">
    <property type="entry name" value="CYTOCHROME C-TYPE BIOGENESIS PROTEIN CCME HOMOLOG, MITOCHONDRIAL"/>
    <property type="match status" value="1"/>
</dbReference>
<dbReference type="Pfam" id="PF03100">
    <property type="entry name" value="CcmE"/>
    <property type="match status" value="1"/>
</dbReference>
<dbReference type="SUPFAM" id="SSF82093">
    <property type="entry name" value="Heme chaperone CcmE"/>
    <property type="match status" value="1"/>
</dbReference>
<comment type="function">
    <text evidence="1">Heme chaperone required for the biogenesis of c-type cytochromes. Transiently binds heme delivered by CcmC and transfers the heme to apo-cytochromes in a process facilitated by CcmF and CcmH.</text>
</comment>
<comment type="subcellular location">
    <subcellularLocation>
        <location evidence="1">Cell inner membrane</location>
        <topology evidence="1">Single-pass type II membrane protein</topology>
        <orientation evidence="1">Periplasmic side</orientation>
    </subcellularLocation>
</comment>
<comment type="similarity">
    <text evidence="1">Belongs to the CcmE/CycJ family.</text>
</comment>
<protein>
    <recommendedName>
        <fullName evidence="1">Cytochrome c-type biogenesis protein CcmE</fullName>
    </recommendedName>
    <alternativeName>
        <fullName evidence="1">Cytochrome c maturation protein E</fullName>
    </alternativeName>
    <alternativeName>
        <fullName evidence="1">Heme chaperone CcmE</fullName>
    </alternativeName>
</protein>
<name>CCME_RHOPT</name>
<accession>B3QBQ3</accession>
<feature type="chain" id="PRO_1000189048" description="Cytochrome c-type biogenesis protein CcmE">
    <location>
        <begin position="1"/>
        <end position="167"/>
    </location>
</feature>
<feature type="topological domain" description="Cytoplasmic" evidence="1">
    <location>
        <begin position="1"/>
        <end position="7"/>
    </location>
</feature>
<feature type="transmembrane region" description="Helical; Signal-anchor for type II membrane protein" evidence="1">
    <location>
        <begin position="8"/>
        <end position="28"/>
    </location>
</feature>
<feature type="topological domain" description="Periplasmic" evidence="1">
    <location>
        <begin position="29"/>
        <end position="167"/>
    </location>
</feature>
<feature type="region of interest" description="Disordered" evidence="2">
    <location>
        <begin position="137"/>
        <end position="167"/>
    </location>
</feature>
<feature type="compositionally biased region" description="Basic and acidic residues" evidence="2">
    <location>
        <begin position="137"/>
        <end position="150"/>
    </location>
</feature>
<feature type="compositionally biased region" description="Polar residues" evidence="2">
    <location>
        <begin position="151"/>
        <end position="161"/>
    </location>
</feature>
<feature type="binding site" description="covalent" evidence="1">
    <location>
        <position position="122"/>
    </location>
    <ligand>
        <name>heme</name>
        <dbReference type="ChEBI" id="CHEBI:30413"/>
    </ligand>
</feature>
<feature type="binding site" description="axial binding residue" evidence="1">
    <location>
        <position position="126"/>
    </location>
    <ligand>
        <name>heme</name>
        <dbReference type="ChEBI" id="CHEBI:30413"/>
    </ligand>
    <ligandPart>
        <name>Fe</name>
        <dbReference type="ChEBI" id="CHEBI:18248"/>
    </ligandPart>
</feature>
<evidence type="ECO:0000255" key="1">
    <source>
        <dbReference type="HAMAP-Rule" id="MF_01959"/>
    </source>
</evidence>
<evidence type="ECO:0000256" key="2">
    <source>
        <dbReference type="SAM" id="MobiDB-lite"/>
    </source>
</evidence>
<keyword id="KW-0997">Cell inner membrane</keyword>
<keyword id="KW-1003">Cell membrane</keyword>
<keyword id="KW-0201">Cytochrome c-type biogenesis</keyword>
<keyword id="KW-0349">Heme</keyword>
<keyword id="KW-0408">Iron</keyword>
<keyword id="KW-0472">Membrane</keyword>
<keyword id="KW-0479">Metal-binding</keyword>
<keyword id="KW-0735">Signal-anchor</keyword>
<keyword id="KW-0812">Transmembrane</keyword>
<keyword id="KW-1133">Transmembrane helix</keyword>